<protein>
    <recommendedName>
        <fullName evidence="1">Protein-glutamate methylesterase/protein-glutamine glutaminase 2</fullName>
        <ecNumber evidence="1">3.1.1.61</ecNumber>
        <ecNumber evidence="1">3.5.1.44</ecNumber>
    </recommendedName>
</protein>
<reference key="1">
    <citation type="journal article" date="2010" name="Environ. Microbiol.">
        <title>The genome of Syntrophomonas wolfei: new insights into syntrophic metabolism and biohydrogen production.</title>
        <authorList>
            <person name="Sieber J.R."/>
            <person name="Sims D.R."/>
            <person name="Han C."/>
            <person name="Kim E."/>
            <person name="Lykidis A."/>
            <person name="Lapidus A.L."/>
            <person name="McDonnald E."/>
            <person name="Rohlin L."/>
            <person name="Culley D.E."/>
            <person name="Gunsalus R."/>
            <person name="McInerney M.J."/>
        </authorList>
    </citation>
    <scope>NUCLEOTIDE SEQUENCE [LARGE SCALE GENOMIC DNA]</scope>
    <source>
        <strain>DSM 2245B / Goettingen</strain>
    </source>
</reference>
<accession>Q0AXB7</accession>
<sequence length="341" mass="37402">MRLRRIKTLIVDDSLLFRETLARGISRDPAIEVVATAVDAFMARDMIIKYKPDVMTLDVEMPRMSGIEFLRRLMPQYPLPVVMISALSESVFDALNAGAIDFVAKPDMNRNRDLDSFFSELILKIKIASVARLGRRAEVSKLLPTGKSQADQGWVIAIGASTGGPEAIYQIVKNFNQDTPGTVIVQHMPAGFTRMYAERLNDTCVVEVKEAQNNDQVKMGQVLIAPGEYQMRLKQKAGNYMVECHPGEKVNGHCPAVDVLFDSVAQSAGARAVGIILTGMGSDGARGLLAMRKAGARTIGQDEASCVVYGMPKVAYELGAVEKQYPLNYIGQALYKLINQL</sequence>
<gene>
    <name evidence="1" type="primary">cheB2</name>
    <name type="ordered locus">Swol_1329</name>
</gene>
<comment type="function">
    <text evidence="1">Involved in chemotaxis. Part of a chemotaxis signal transduction system that modulates chemotaxis in response to various stimuli. Catalyzes the demethylation of specific methylglutamate residues introduced into the chemoreceptors (methyl-accepting chemotaxis proteins or MCP) by CheR. Also mediates the irreversible deamidation of specific glutamine residues to glutamic acid.</text>
</comment>
<comment type="catalytic activity">
    <reaction evidence="1">
        <text>[protein]-L-glutamate 5-O-methyl ester + H2O = L-glutamyl-[protein] + methanol + H(+)</text>
        <dbReference type="Rhea" id="RHEA:23236"/>
        <dbReference type="Rhea" id="RHEA-COMP:10208"/>
        <dbReference type="Rhea" id="RHEA-COMP:10311"/>
        <dbReference type="ChEBI" id="CHEBI:15377"/>
        <dbReference type="ChEBI" id="CHEBI:15378"/>
        <dbReference type="ChEBI" id="CHEBI:17790"/>
        <dbReference type="ChEBI" id="CHEBI:29973"/>
        <dbReference type="ChEBI" id="CHEBI:82795"/>
        <dbReference type="EC" id="3.1.1.61"/>
    </reaction>
</comment>
<comment type="catalytic activity">
    <reaction evidence="1">
        <text>L-glutaminyl-[protein] + H2O = L-glutamyl-[protein] + NH4(+)</text>
        <dbReference type="Rhea" id="RHEA:16441"/>
        <dbReference type="Rhea" id="RHEA-COMP:10207"/>
        <dbReference type="Rhea" id="RHEA-COMP:10208"/>
        <dbReference type="ChEBI" id="CHEBI:15377"/>
        <dbReference type="ChEBI" id="CHEBI:28938"/>
        <dbReference type="ChEBI" id="CHEBI:29973"/>
        <dbReference type="ChEBI" id="CHEBI:30011"/>
        <dbReference type="EC" id="3.5.1.44"/>
    </reaction>
</comment>
<comment type="subcellular location">
    <subcellularLocation>
        <location evidence="1">Cytoplasm</location>
    </subcellularLocation>
</comment>
<comment type="domain">
    <text evidence="1">Contains a C-terminal catalytic domain, and an N-terminal region which modulates catalytic activity.</text>
</comment>
<comment type="PTM">
    <text evidence="1">Phosphorylated by CheA. Phosphorylation of the N-terminal regulatory domain activates the methylesterase activity.</text>
</comment>
<comment type="similarity">
    <text evidence="1">Belongs to the CheB family.</text>
</comment>
<proteinExistence type="inferred from homology"/>
<organism>
    <name type="scientific">Syntrophomonas wolfei subsp. wolfei (strain DSM 2245B / Goettingen)</name>
    <dbReference type="NCBI Taxonomy" id="335541"/>
    <lineage>
        <taxon>Bacteria</taxon>
        <taxon>Bacillati</taxon>
        <taxon>Bacillota</taxon>
        <taxon>Clostridia</taxon>
        <taxon>Eubacteriales</taxon>
        <taxon>Syntrophomonadaceae</taxon>
        <taxon>Syntrophomonas</taxon>
    </lineage>
</organism>
<name>CHEB2_SYNWW</name>
<dbReference type="EC" id="3.1.1.61" evidence="1"/>
<dbReference type="EC" id="3.5.1.44" evidence="1"/>
<dbReference type="EMBL" id="CP000448">
    <property type="protein sequence ID" value="ABI68637.1"/>
    <property type="molecule type" value="Genomic_DNA"/>
</dbReference>
<dbReference type="RefSeq" id="WP_011640737.1">
    <property type="nucleotide sequence ID" value="NC_008346.1"/>
</dbReference>
<dbReference type="SMR" id="Q0AXB7"/>
<dbReference type="STRING" id="335541.Swol_1329"/>
<dbReference type="KEGG" id="swo:Swol_1329"/>
<dbReference type="eggNOG" id="COG2201">
    <property type="taxonomic scope" value="Bacteria"/>
</dbReference>
<dbReference type="HOGENOM" id="CLU_000445_51_0_9"/>
<dbReference type="OrthoDB" id="9793421at2"/>
<dbReference type="Proteomes" id="UP000001968">
    <property type="component" value="Chromosome"/>
</dbReference>
<dbReference type="GO" id="GO:0005737">
    <property type="term" value="C:cytoplasm"/>
    <property type="evidence" value="ECO:0007669"/>
    <property type="project" value="UniProtKB-SubCell"/>
</dbReference>
<dbReference type="GO" id="GO:0000156">
    <property type="term" value="F:phosphorelay response regulator activity"/>
    <property type="evidence" value="ECO:0007669"/>
    <property type="project" value="InterPro"/>
</dbReference>
<dbReference type="GO" id="GO:0008984">
    <property type="term" value="F:protein-glutamate methylesterase activity"/>
    <property type="evidence" value="ECO:0007669"/>
    <property type="project" value="UniProtKB-UniRule"/>
</dbReference>
<dbReference type="GO" id="GO:0050568">
    <property type="term" value="F:protein-glutamine glutaminase activity"/>
    <property type="evidence" value="ECO:0007669"/>
    <property type="project" value="UniProtKB-UniRule"/>
</dbReference>
<dbReference type="GO" id="GO:0006935">
    <property type="term" value="P:chemotaxis"/>
    <property type="evidence" value="ECO:0007669"/>
    <property type="project" value="UniProtKB-UniRule"/>
</dbReference>
<dbReference type="CDD" id="cd16432">
    <property type="entry name" value="CheB_Rec"/>
    <property type="match status" value="1"/>
</dbReference>
<dbReference type="CDD" id="cd17541">
    <property type="entry name" value="REC_CheB-like"/>
    <property type="match status" value="1"/>
</dbReference>
<dbReference type="Gene3D" id="3.40.50.2300">
    <property type="match status" value="1"/>
</dbReference>
<dbReference type="Gene3D" id="3.40.50.180">
    <property type="entry name" value="Methylesterase CheB, C-terminal domain"/>
    <property type="match status" value="1"/>
</dbReference>
<dbReference type="HAMAP" id="MF_00099">
    <property type="entry name" value="CheB_chemtxs"/>
    <property type="match status" value="1"/>
</dbReference>
<dbReference type="InterPro" id="IPR008248">
    <property type="entry name" value="CheB-like"/>
</dbReference>
<dbReference type="InterPro" id="IPR035909">
    <property type="entry name" value="CheB_C"/>
</dbReference>
<dbReference type="InterPro" id="IPR011006">
    <property type="entry name" value="CheY-like_superfamily"/>
</dbReference>
<dbReference type="InterPro" id="IPR000673">
    <property type="entry name" value="Sig_transdc_resp-reg_Me-estase"/>
</dbReference>
<dbReference type="InterPro" id="IPR001789">
    <property type="entry name" value="Sig_transdc_resp-reg_receiver"/>
</dbReference>
<dbReference type="NCBIfam" id="NF001965">
    <property type="entry name" value="PRK00742.1"/>
    <property type="match status" value="1"/>
</dbReference>
<dbReference type="NCBIfam" id="NF009206">
    <property type="entry name" value="PRK12555.1"/>
    <property type="match status" value="1"/>
</dbReference>
<dbReference type="PANTHER" id="PTHR42872">
    <property type="entry name" value="PROTEIN-GLUTAMATE METHYLESTERASE/PROTEIN-GLUTAMINE GLUTAMINASE"/>
    <property type="match status" value="1"/>
</dbReference>
<dbReference type="PANTHER" id="PTHR42872:SF6">
    <property type="entry name" value="PROTEIN-GLUTAMATE METHYLESTERASE_PROTEIN-GLUTAMINE GLUTAMINASE"/>
    <property type="match status" value="1"/>
</dbReference>
<dbReference type="Pfam" id="PF01339">
    <property type="entry name" value="CheB_methylest"/>
    <property type="match status" value="1"/>
</dbReference>
<dbReference type="Pfam" id="PF00072">
    <property type="entry name" value="Response_reg"/>
    <property type="match status" value="1"/>
</dbReference>
<dbReference type="PIRSF" id="PIRSF000876">
    <property type="entry name" value="RR_chemtxs_CheB"/>
    <property type="match status" value="1"/>
</dbReference>
<dbReference type="SMART" id="SM00448">
    <property type="entry name" value="REC"/>
    <property type="match status" value="1"/>
</dbReference>
<dbReference type="SUPFAM" id="SSF52172">
    <property type="entry name" value="CheY-like"/>
    <property type="match status" value="1"/>
</dbReference>
<dbReference type="SUPFAM" id="SSF52738">
    <property type="entry name" value="Methylesterase CheB, C-terminal domain"/>
    <property type="match status" value="1"/>
</dbReference>
<dbReference type="PROSITE" id="PS50122">
    <property type="entry name" value="CHEB"/>
    <property type="match status" value="1"/>
</dbReference>
<dbReference type="PROSITE" id="PS50110">
    <property type="entry name" value="RESPONSE_REGULATORY"/>
    <property type="match status" value="1"/>
</dbReference>
<keyword id="KW-0145">Chemotaxis</keyword>
<keyword id="KW-0963">Cytoplasm</keyword>
<keyword id="KW-0378">Hydrolase</keyword>
<keyword id="KW-0597">Phosphoprotein</keyword>
<keyword id="KW-1185">Reference proteome</keyword>
<feature type="chain" id="PRO_0000264326" description="Protein-glutamate methylesterase/protein-glutamine glutaminase 2">
    <location>
        <begin position="1"/>
        <end position="341"/>
    </location>
</feature>
<feature type="domain" description="Response regulatory" evidence="1">
    <location>
        <begin position="7"/>
        <end position="120"/>
    </location>
</feature>
<feature type="domain" description="CheB-type methylesterase" evidence="1">
    <location>
        <begin position="155"/>
        <end position="341"/>
    </location>
</feature>
<feature type="active site" evidence="1">
    <location>
        <position position="161"/>
    </location>
</feature>
<feature type="active site" evidence="1">
    <location>
        <position position="187"/>
    </location>
</feature>
<feature type="active site" evidence="1">
    <location>
        <position position="283"/>
    </location>
</feature>
<feature type="modified residue" description="4-aspartylphosphate" evidence="1">
    <location>
        <position position="58"/>
    </location>
</feature>
<evidence type="ECO:0000255" key="1">
    <source>
        <dbReference type="HAMAP-Rule" id="MF_00099"/>
    </source>
</evidence>